<accession>Q9WU11</accession>
<organism>
    <name type="scientific">Rattus norvegicus</name>
    <name type="common">Rat</name>
    <dbReference type="NCBI Taxonomy" id="10116"/>
    <lineage>
        <taxon>Eukaryota</taxon>
        <taxon>Metazoa</taxon>
        <taxon>Chordata</taxon>
        <taxon>Craniata</taxon>
        <taxon>Vertebrata</taxon>
        <taxon>Euteleostomi</taxon>
        <taxon>Mammalia</taxon>
        <taxon>Eutheria</taxon>
        <taxon>Euarchontoglires</taxon>
        <taxon>Glires</taxon>
        <taxon>Rodentia</taxon>
        <taxon>Myomorpha</taxon>
        <taxon>Muroidea</taxon>
        <taxon>Muridae</taxon>
        <taxon>Murinae</taxon>
        <taxon>Rattus</taxon>
    </lineage>
</organism>
<reference key="1">
    <citation type="journal article" date="1999" name="Proc. Natl. Acad. Sci. U.S.A.">
        <title>An imprinted, mammalian bicistronic transcript encodes two independent proteins.</title>
        <authorList>
            <person name="Gray T.A."/>
            <person name="Saitoh S."/>
            <person name="Nicholls R.D."/>
        </authorList>
    </citation>
    <scope>NUCLEOTIDE SEQUENCE [MRNA]</scope>
</reference>
<name>SNURF_RAT</name>
<protein>
    <recommendedName>
        <fullName>SNRPN upstream reading frame protein</fullName>
    </recommendedName>
</protein>
<comment type="subcellular location">
    <subcellularLocation>
        <location evidence="1">Nucleus</location>
    </subcellularLocation>
</comment>
<comment type="miscellaneous">
    <text>Encoded on a bicistronic transcript that code for two proteins, SNRPN and SNURF.</text>
</comment>
<comment type="similarity">
    <text evidence="2">Belongs to the SNURF family.</text>
</comment>
<feature type="chain" id="PRO_0000312997" description="SNRPN upstream reading frame protein">
    <location>
        <begin position="1"/>
        <end position="71"/>
    </location>
</feature>
<dbReference type="EMBL" id="AF101041">
    <property type="protein sequence ID" value="AAD31388.1"/>
    <property type="molecule type" value="mRNA"/>
</dbReference>
<dbReference type="RefSeq" id="NP_001257641.1">
    <property type="nucleotide sequence ID" value="NM_001270712.1"/>
</dbReference>
<dbReference type="RefSeq" id="NP_570094.1">
    <property type="nucleotide sequence ID" value="NM_130738.2"/>
</dbReference>
<dbReference type="BioGRID" id="250228">
    <property type="interactions" value="2"/>
</dbReference>
<dbReference type="FunCoup" id="Q9WU11">
    <property type="interactions" value="37"/>
</dbReference>
<dbReference type="STRING" id="10116.ENSRNOP00000071994"/>
<dbReference type="PhosphoSitePlus" id="Q9WU11"/>
<dbReference type="PaxDb" id="10116-ENSRNOP00000030887"/>
<dbReference type="GeneID" id="113938"/>
<dbReference type="KEGG" id="rno:113938"/>
<dbReference type="UCSC" id="RGD:69269">
    <property type="organism name" value="rat"/>
</dbReference>
<dbReference type="AGR" id="RGD:69269"/>
<dbReference type="CTD" id="8926"/>
<dbReference type="RGD" id="69269">
    <property type="gene designation" value="Snurf"/>
</dbReference>
<dbReference type="VEuPathDB" id="HostDB:ENSRNOG00000054391"/>
<dbReference type="eggNOG" id="ENOG502T5G1">
    <property type="taxonomic scope" value="Eukaryota"/>
</dbReference>
<dbReference type="HOGENOM" id="CLU_165583_0_0_1"/>
<dbReference type="InParanoid" id="Q9WU11"/>
<dbReference type="OrthoDB" id="9727301at2759"/>
<dbReference type="PhylomeDB" id="Q9WU11"/>
<dbReference type="PRO" id="PR:Q9WU11"/>
<dbReference type="Proteomes" id="UP000002494">
    <property type="component" value="Chromosome 1"/>
</dbReference>
<dbReference type="Bgee" id="ENSRNOG00000054391">
    <property type="expression patterns" value="Expressed in frontal cortex and 18 other cell types or tissues"/>
</dbReference>
<dbReference type="GO" id="GO:0016607">
    <property type="term" value="C:nuclear speck"/>
    <property type="evidence" value="ECO:0000318"/>
    <property type="project" value="GO_Central"/>
</dbReference>
<dbReference type="GO" id="GO:0005634">
    <property type="term" value="C:nucleus"/>
    <property type="evidence" value="ECO:0000266"/>
    <property type="project" value="RGD"/>
</dbReference>
<dbReference type="GO" id="GO:0051117">
    <property type="term" value="F:ATPase binding"/>
    <property type="evidence" value="ECO:0000266"/>
    <property type="project" value="RGD"/>
</dbReference>
<dbReference type="InterPro" id="IPR009847">
    <property type="entry name" value="SNURF"/>
</dbReference>
<dbReference type="PANTHER" id="PTHR14508">
    <property type="entry name" value="SNRPN UPSTREAM READING FRAME PROTEIN, SNURF"/>
    <property type="match status" value="1"/>
</dbReference>
<dbReference type="PANTHER" id="PTHR14508:SF2">
    <property type="entry name" value="SNRPN UPSTREAM READING FRAME PROTEIN-RELATED"/>
    <property type="match status" value="1"/>
</dbReference>
<dbReference type="Pfam" id="PF07192">
    <property type="entry name" value="SNURF"/>
    <property type="match status" value="1"/>
</dbReference>
<evidence type="ECO:0000250" key="1"/>
<evidence type="ECO:0000305" key="2"/>
<sequence length="71" mass="8436">MERGRDRLHLRRTTEQHVPEIEVQVKRRRTASLSNQECHLYPRRSQQQQIPVVDFQAELRQAFLAETPRGG</sequence>
<keyword id="KW-0539">Nucleus</keyword>
<keyword id="KW-1185">Reference proteome</keyword>
<proteinExistence type="inferred from homology"/>
<gene>
    <name type="primary">Snurf</name>
</gene>